<proteinExistence type="evidence at transcript level"/>
<accession>P35332</accession>
<protein>
    <recommendedName>
        <fullName>Hippocalcin-like protein 4</fullName>
    </recommendedName>
    <alternativeName>
        <fullName>Neural visinin-like protein 2</fullName>
        <shortName>NVL-2</shortName>
        <shortName>NVP-2</shortName>
    </alternativeName>
    <alternativeName>
        <fullName>Visinin-like protein 2</fullName>
        <shortName>VILIP-2</shortName>
    </alternativeName>
</protein>
<name>HPCL4_RAT</name>
<organism>
    <name type="scientific">Rattus norvegicus</name>
    <name type="common">Rat</name>
    <dbReference type="NCBI Taxonomy" id="10116"/>
    <lineage>
        <taxon>Eukaryota</taxon>
        <taxon>Metazoa</taxon>
        <taxon>Chordata</taxon>
        <taxon>Craniata</taxon>
        <taxon>Vertebrata</taxon>
        <taxon>Euteleostomi</taxon>
        <taxon>Mammalia</taxon>
        <taxon>Eutheria</taxon>
        <taxon>Euarchontoglires</taxon>
        <taxon>Glires</taxon>
        <taxon>Rodentia</taxon>
        <taxon>Myomorpha</taxon>
        <taxon>Muroidea</taxon>
        <taxon>Muridae</taxon>
        <taxon>Murinae</taxon>
        <taxon>Rattus</taxon>
    </lineage>
</organism>
<keyword id="KW-0106">Calcium</keyword>
<keyword id="KW-0449">Lipoprotein</keyword>
<keyword id="KW-0479">Metal-binding</keyword>
<keyword id="KW-0519">Myristate</keyword>
<keyword id="KW-1185">Reference proteome</keyword>
<keyword id="KW-0677">Repeat</keyword>
<comment type="function">
    <text>May be involved in the calcium-dependent regulation of rhodopsin phosphorylation.</text>
</comment>
<comment type="tissue specificity">
    <text>Neuron-specific in the central and peripheral nervous system.</text>
</comment>
<comment type="miscellaneous">
    <text evidence="1">Probably binds two or three calcium ions.</text>
</comment>
<comment type="similarity">
    <text evidence="3">Belongs to the recoverin family.</text>
</comment>
<sequence length="191" mass="22245">MGKNNSKLAPEELEDLVQNTEFSEQELKQWYKGFLKDCPSGILNLEEFQQLYIKFFPYGDASKFAQHAFRTFDKNGDGTIDFREFICALSVTSRGSFEQKLNWAFEMYDLDGDGRITRLEMLEIIEAIYKMVGTVIMMRMNQDGLTPQQRVDKIFKKMDQDKDDQITLEEFKEAAKSDPSIVLLLQCDMQK</sequence>
<evidence type="ECO:0000250" key="1"/>
<evidence type="ECO:0000255" key="2">
    <source>
        <dbReference type="PROSITE-ProRule" id="PRU00448"/>
    </source>
</evidence>
<evidence type="ECO:0000305" key="3"/>
<dbReference type="EMBL" id="D13125">
    <property type="protein sequence ID" value="BAA02427.1"/>
    <property type="molecule type" value="mRNA"/>
</dbReference>
<dbReference type="PIR" id="JH0815">
    <property type="entry name" value="JH0815"/>
</dbReference>
<dbReference type="RefSeq" id="NP_001416790.1">
    <property type="nucleotide sequence ID" value="NM_001429861.1"/>
</dbReference>
<dbReference type="RefSeq" id="NP_059053.1">
    <property type="nucleotide sequence ID" value="NM_017357.2"/>
</dbReference>
<dbReference type="RefSeq" id="XP_006238891.1">
    <property type="nucleotide sequence ID" value="XM_006238829.3"/>
</dbReference>
<dbReference type="SMR" id="P35332"/>
<dbReference type="FunCoup" id="P35332">
    <property type="interactions" value="683"/>
</dbReference>
<dbReference type="STRING" id="10116.ENSRNOP00000066655"/>
<dbReference type="iPTMnet" id="P35332"/>
<dbReference type="PhosphoSitePlus" id="P35332"/>
<dbReference type="SwissPalm" id="P35332"/>
<dbReference type="PaxDb" id="10116-ENSRNOP00000066655"/>
<dbReference type="Ensembl" id="ENSRNOT00000074347.3">
    <property type="protein sequence ID" value="ENSRNOP00000066655.1"/>
    <property type="gene ID" value="ENSRNOG00000050983.3"/>
</dbReference>
<dbReference type="GeneID" id="50872"/>
<dbReference type="KEGG" id="rno:50872"/>
<dbReference type="UCSC" id="RGD:708491">
    <property type="organism name" value="rat"/>
</dbReference>
<dbReference type="AGR" id="RGD:708491"/>
<dbReference type="CTD" id="51440"/>
<dbReference type="RGD" id="708491">
    <property type="gene designation" value="Hpcal4"/>
</dbReference>
<dbReference type="eggNOG" id="KOG0044">
    <property type="taxonomic scope" value="Eukaryota"/>
</dbReference>
<dbReference type="GeneTree" id="ENSGT00940000161166"/>
<dbReference type="HOGENOM" id="CLU_072366_1_0_1"/>
<dbReference type="InParanoid" id="P35332"/>
<dbReference type="OMA" id="RAWEHQP"/>
<dbReference type="OrthoDB" id="191686at2759"/>
<dbReference type="PhylomeDB" id="P35332"/>
<dbReference type="TreeFam" id="TF300009"/>
<dbReference type="PRO" id="PR:P35332"/>
<dbReference type="Proteomes" id="UP000002494">
    <property type="component" value="Chromosome 5"/>
</dbReference>
<dbReference type="Bgee" id="ENSRNOG00000050983">
    <property type="expression patterns" value="Expressed in frontal cortex and 8 other cell types or tissues"/>
</dbReference>
<dbReference type="GO" id="GO:0005246">
    <property type="term" value="F:calcium channel regulator activity"/>
    <property type="evidence" value="ECO:0000314"/>
    <property type="project" value="RGD"/>
</dbReference>
<dbReference type="GO" id="GO:0005509">
    <property type="term" value="F:calcium ion binding"/>
    <property type="evidence" value="ECO:0000318"/>
    <property type="project" value="GO_Central"/>
</dbReference>
<dbReference type="GO" id="GO:0019904">
    <property type="term" value="F:protein domain specific binding"/>
    <property type="evidence" value="ECO:0000353"/>
    <property type="project" value="RGD"/>
</dbReference>
<dbReference type="GO" id="GO:0009966">
    <property type="term" value="P:regulation of signal transduction"/>
    <property type="evidence" value="ECO:0000318"/>
    <property type="project" value="GO_Central"/>
</dbReference>
<dbReference type="GO" id="GO:0009408">
    <property type="term" value="P:response to heat"/>
    <property type="evidence" value="ECO:0007669"/>
    <property type="project" value="Ensembl"/>
</dbReference>
<dbReference type="CDD" id="cd00051">
    <property type="entry name" value="EFh"/>
    <property type="match status" value="2"/>
</dbReference>
<dbReference type="FunFam" id="1.10.238.10:FF:000009">
    <property type="entry name" value="Visinin-like protein 1"/>
    <property type="match status" value="1"/>
</dbReference>
<dbReference type="Gene3D" id="1.10.238.10">
    <property type="entry name" value="EF-hand"/>
    <property type="match status" value="1"/>
</dbReference>
<dbReference type="InterPro" id="IPR011992">
    <property type="entry name" value="EF-hand-dom_pair"/>
</dbReference>
<dbReference type="InterPro" id="IPR018247">
    <property type="entry name" value="EF_Hand_1_Ca_BS"/>
</dbReference>
<dbReference type="InterPro" id="IPR002048">
    <property type="entry name" value="EF_hand_dom"/>
</dbReference>
<dbReference type="InterPro" id="IPR028846">
    <property type="entry name" value="Recoverin"/>
</dbReference>
<dbReference type="PANTHER" id="PTHR23055">
    <property type="entry name" value="CALCIUM BINDING PROTEINS"/>
    <property type="match status" value="1"/>
</dbReference>
<dbReference type="PANTHER" id="PTHR23055:SF84">
    <property type="entry name" value="HIPPOCALCIN-LIKE PROTEIN 4"/>
    <property type="match status" value="1"/>
</dbReference>
<dbReference type="Pfam" id="PF00036">
    <property type="entry name" value="EF-hand_1"/>
    <property type="match status" value="1"/>
</dbReference>
<dbReference type="Pfam" id="PF13499">
    <property type="entry name" value="EF-hand_7"/>
    <property type="match status" value="1"/>
</dbReference>
<dbReference type="PRINTS" id="PR00450">
    <property type="entry name" value="RECOVERIN"/>
</dbReference>
<dbReference type="SMART" id="SM00054">
    <property type="entry name" value="EFh"/>
    <property type="match status" value="3"/>
</dbReference>
<dbReference type="SUPFAM" id="SSF47473">
    <property type="entry name" value="EF-hand"/>
    <property type="match status" value="1"/>
</dbReference>
<dbReference type="PROSITE" id="PS00018">
    <property type="entry name" value="EF_HAND_1"/>
    <property type="match status" value="3"/>
</dbReference>
<dbReference type="PROSITE" id="PS50222">
    <property type="entry name" value="EF_HAND_2"/>
    <property type="match status" value="3"/>
</dbReference>
<feature type="initiator methionine" description="Removed">
    <location>
        <position position="1"/>
    </location>
</feature>
<feature type="chain" id="PRO_0000073780" description="Hippocalcin-like protein 4">
    <location>
        <begin position="2"/>
        <end position="191"/>
    </location>
</feature>
<feature type="domain" description="EF-hand 1" evidence="3">
    <location>
        <begin position="24"/>
        <end position="59"/>
    </location>
</feature>
<feature type="domain" description="EF-hand 2" evidence="2">
    <location>
        <begin position="60"/>
        <end position="95"/>
    </location>
</feature>
<feature type="domain" description="EF-hand 3" evidence="2">
    <location>
        <begin position="96"/>
        <end position="131"/>
    </location>
</feature>
<feature type="domain" description="EF-hand 4" evidence="2">
    <location>
        <begin position="146"/>
        <end position="181"/>
    </location>
</feature>
<feature type="binding site" evidence="2">
    <location>
        <position position="73"/>
    </location>
    <ligand>
        <name>Ca(2+)</name>
        <dbReference type="ChEBI" id="CHEBI:29108"/>
        <label>1</label>
    </ligand>
</feature>
<feature type="binding site" evidence="2">
    <location>
        <position position="75"/>
    </location>
    <ligand>
        <name>Ca(2+)</name>
        <dbReference type="ChEBI" id="CHEBI:29108"/>
        <label>1</label>
    </ligand>
</feature>
<feature type="binding site" evidence="2">
    <location>
        <position position="77"/>
    </location>
    <ligand>
        <name>Ca(2+)</name>
        <dbReference type="ChEBI" id="CHEBI:29108"/>
        <label>1</label>
    </ligand>
</feature>
<feature type="binding site" evidence="2">
    <location>
        <position position="79"/>
    </location>
    <ligand>
        <name>Ca(2+)</name>
        <dbReference type="ChEBI" id="CHEBI:29108"/>
        <label>1</label>
    </ligand>
</feature>
<feature type="binding site" evidence="2">
    <location>
        <position position="84"/>
    </location>
    <ligand>
        <name>Ca(2+)</name>
        <dbReference type="ChEBI" id="CHEBI:29108"/>
        <label>1</label>
    </ligand>
</feature>
<feature type="binding site" evidence="2">
    <location>
        <position position="109"/>
    </location>
    <ligand>
        <name>Ca(2+)</name>
        <dbReference type="ChEBI" id="CHEBI:29108"/>
        <label>2</label>
    </ligand>
</feature>
<feature type="binding site" evidence="2">
    <location>
        <position position="111"/>
    </location>
    <ligand>
        <name>Ca(2+)</name>
        <dbReference type="ChEBI" id="CHEBI:29108"/>
        <label>2</label>
    </ligand>
</feature>
<feature type="binding site" evidence="2">
    <location>
        <position position="113"/>
    </location>
    <ligand>
        <name>Ca(2+)</name>
        <dbReference type="ChEBI" id="CHEBI:29108"/>
        <label>2</label>
    </ligand>
</feature>
<feature type="binding site" evidence="2">
    <location>
        <position position="115"/>
    </location>
    <ligand>
        <name>Ca(2+)</name>
        <dbReference type="ChEBI" id="CHEBI:29108"/>
        <label>2</label>
    </ligand>
</feature>
<feature type="binding site" evidence="2">
    <location>
        <position position="120"/>
    </location>
    <ligand>
        <name>Ca(2+)</name>
        <dbReference type="ChEBI" id="CHEBI:29108"/>
        <label>2</label>
    </ligand>
</feature>
<feature type="binding site" evidence="2">
    <location>
        <position position="159"/>
    </location>
    <ligand>
        <name>Ca(2+)</name>
        <dbReference type="ChEBI" id="CHEBI:29108"/>
        <label>3</label>
    </ligand>
</feature>
<feature type="binding site" evidence="2">
    <location>
        <position position="161"/>
    </location>
    <ligand>
        <name>Ca(2+)</name>
        <dbReference type="ChEBI" id="CHEBI:29108"/>
        <label>3</label>
    </ligand>
</feature>
<feature type="binding site" evidence="2">
    <location>
        <position position="163"/>
    </location>
    <ligand>
        <name>Ca(2+)</name>
        <dbReference type="ChEBI" id="CHEBI:29108"/>
        <label>3</label>
    </ligand>
</feature>
<feature type="binding site" evidence="2">
    <location>
        <position position="165"/>
    </location>
    <ligand>
        <name>Ca(2+)</name>
        <dbReference type="ChEBI" id="CHEBI:29108"/>
        <label>3</label>
    </ligand>
</feature>
<feature type="binding site" evidence="2">
    <location>
        <position position="170"/>
    </location>
    <ligand>
        <name>Ca(2+)</name>
        <dbReference type="ChEBI" id="CHEBI:29108"/>
        <label>3</label>
    </ligand>
</feature>
<feature type="lipid moiety-binding region" description="N-myristoyl glycine" evidence="1">
    <location>
        <position position="2"/>
    </location>
</feature>
<gene>
    <name type="primary">Hpcal4</name>
</gene>
<reference key="1">
    <citation type="journal article" date="1993" name="J. Neurochem.">
        <title>Molecular cloning of two additional members of the neural visinin-like Ca(2+)-binding protein gene family.</title>
        <authorList>
            <person name="Kajimoto Y."/>
            <person name="Shirai Y."/>
            <person name="Mukai H."/>
            <person name="Kuno T."/>
            <person name="Tanaka C."/>
        </authorList>
    </citation>
    <scope>NUCLEOTIDE SEQUENCE [MRNA]</scope>
    <source>
        <tissue>Brain</tissue>
    </source>
</reference>